<reference key="1">
    <citation type="journal article" date="2004" name="Proc. Natl. Acad. Sci. U.S.A.">
        <title>Genome sequence of the deep-sea gamma-proteobacterium Idiomarina loihiensis reveals amino acid fermentation as a source of carbon and energy.</title>
        <authorList>
            <person name="Hou S."/>
            <person name="Saw J.H."/>
            <person name="Lee K.S."/>
            <person name="Freitas T.A."/>
            <person name="Belisle C."/>
            <person name="Kawarabayasi Y."/>
            <person name="Donachie S.P."/>
            <person name="Pikina A."/>
            <person name="Galperin M.Y."/>
            <person name="Koonin E.V."/>
            <person name="Makarova K.S."/>
            <person name="Omelchenko M.V."/>
            <person name="Sorokin A."/>
            <person name="Wolf Y.I."/>
            <person name="Li Q.X."/>
            <person name="Keum Y.S."/>
            <person name="Campbell S."/>
            <person name="Denery J."/>
            <person name="Aizawa S."/>
            <person name="Shibata S."/>
            <person name="Malahoff A."/>
            <person name="Alam M."/>
        </authorList>
    </citation>
    <scope>NUCLEOTIDE SEQUENCE [LARGE SCALE GENOMIC DNA]</scope>
    <source>
        <strain>ATCC BAA-735 / DSM 15497 / L2-TR</strain>
    </source>
</reference>
<evidence type="ECO:0000255" key="1">
    <source>
        <dbReference type="HAMAP-Rule" id="MF_00636"/>
    </source>
</evidence>
<comment type="function">
    <text evidence="1">Displays ATPase and GTPase activities.</text>
</comment>
<comment type="similarity">
    <text evidence="1">Belongs to the RapZ-like family.</text>
</comment>
<protein>
    <recommendedName>
        <fullName evidence="1">Nucleotide-binding protein IL0393</fullName>
    </recommendedName>
</protein>
<name>Y393_IDILO</name>
<sequence length="283" mass="32569">MQLIIVSGRSGSGKTIALRVLEDLGFYCVDNLPISLLPTLVHAVIEQYQKIAISIDVRNLPEHSEELLDSLSFLPKGVEPEILFIDSDDNTLLKRFGETRRLHPLSQKELPLLEALQAEHKMLEPIMERATWRLDSSDLSLHQLSEQVTERVLGRADKKLIIVFQSFGFKYGLPKDADFVFDARILPNPHWQPELKLLTGLDTDVQIFFRQEPLVTKFIYQLENFLDTWLPHFQRSNRSYLTIATGCTGGQHRSVYISQQLAERFEQKAVKVQVRHRELKTHG</sequence>
<feature type="chain" id="PRO_0000107717" description="Nucleotide-binding protein IL0393">
    <location>
        <begin position="1"/>
        <end position="283"/>
    </location>
</feature>
<feature type="binding site" evidence="1">
    <location>
        <begin position="8"/>
        <end position="15"/>
    </location>
    <ligand>
        <name>ATP</name>
        <dbReference type="ChEBI" id="CHEBI:30616"/>
    </ligand>
</feature>
<feature type="binding site" evidence="1">
    <location>
        <begin position="56"/>
        <end position="59"/>
    </location>
    <ligand>
        <name>GTP</name>
        <dbReference type="ChEBI" id="CHEBI:37565"/>
    </ligand>
</feature>
<organism>
    <name type="scientific">Idiomarina loihiensis (strain ATCC BAA-735 / DSM 15497 / L2-TR)</name>
    <dbReference type="NCBI Taxonomy" id="283942"/>
    <lineage>
        <taxon>Bacteria</taxon>
        <taxon>Pseudomonadati</taxon>
        <taxon>Pseudomonadota</taxon>
        <taxon>Gammaproteobacteria</taxon>
        <taxon>Alteromonadales</taxon>
        <taxon>Idiomarinaceae</taxon>
        <taxon>Idiomarina</taxon>
    </lineage>
</organism>
<proteinExistence type="inferred from homology"/>
<dbReference type="EMBL" id="AE017340">
    <property type="protein sequence ID" value="AAV81236.1"/>
    <property type="molecule type" value="Genomic_DNA"/>
</dbReference>
<dbReference type="SMR" id="Q5R0I2"/>
<dbReference type="STRING" id="283942.IL0393"/>
<dbReference type="GeneID" id="41335545"/>
<dbReference type="KEGG" id="ilo:IL0393"/>
<dbReference type="eggNOG" id="COG1660">
    <property type="taxonomic scope" value="Bacteria"/>
</dbReference>
<dbReference type="HOGENOM" id="CLU_059558_1_1_6"/>
<dbReference type="OrthoDB" id="9784461at2"/>
<dbReference type="Proteomes" id="UP000001171">
    <property type="component" value="Chromosome"/>
</dbReference>
<dbReference type="GO" id="GO:0005524">
    <property type="term" value="F:ATP binding"/>
    <property type="evidence" value="ECO:0007669"/>
    <property type="project" value="UniProtKB-UniRule"/>
</dbReference>
<dbReference type="GO" id="GO:0005525">
    <property type="term" value="F:GTP binding"/>
    <property type="evidence" value="ECO:0007669"/>
    <property type="project" value="UniProtKB-UniRule"/>
</dbReference>
<dbReference type="HAMAP" id="MF_00636">
    <property type="entry name" value="RapZ_like"/>
    <property type="match status" value="1"/>
</dbReference>
<dbReference type="InterPro" id="IPR027417">
    <property type="entry name" value="P-loop_NTPase"/>
</dbReference>
<dbReference type="InterPro" id="IPR005337">
    <property type="entry name" value="RapZ-like"/>
</dbReference>
<dbReference type="InterPro" id="IPR053930">
    <property type="entry name" value="RapZ-like_N"/>
</dbReference>
<dbReference type="InterPro" id="IPR053931">
    <property type="entry name" value="RapZ_C"/>
</dbReference>
<dbReference type="NCBIfam" id="NF003828">
    <property type="entry name" value="PRK05416.1"/>
    <property type="match status" value="1"/>
</dbReference>
<dbReference type="PANTHER" id="PTHR30448">
    <property type="entry name" value="RNASE ADAPTER PROTEIN RAPZ"/>
    <property type="match status" value="1"/>
</dbReference>
<dbReference type="PANTHER" id="PTHR30448:SF0">
    <property type="entry name" value="RNASE ADAPTER PROTEIN RAPZ"/>
    <property type="match status" value="1"/>
</dbReference>
<dbReference type="Pfam" id="PF22740">
    <property type="entry name" value="PapZ_C"/>
    <property type="match status" value="1"/>
</dbReference>
<dbReference type="Pfam" id="PF03668">
    <property type="entry name" value="RapZ-like_N"/>
    <property type="match status" value="1"/>
</dbReference>
<dbReference type="PIRSF" id="PIRSF005052">
    <property type="entry name" value="P-loopkin"/>
    <property type="match status" value="1"/>
</dbReference>
<dbReference type="SUPFAM" id="SSF52540">
    <property type="entry name" value="P-loop containing nucleoside triphosphate hydrolases"/>
    <property type="match status" value="1"/>
</dbReference>
<accession>Q5R0I2</accession>
<keyword id="KW-0067">ATP-binding</keyword>
<keyword id="KW-0342">GTP-binding</keyword>
<keyword id="KW-0547">Nucleotide-binding</keyword>
<keyword id="KW-1185">Reference proteome</keyword>
<gene>
    <name type="ordered locus">IL0393</name>
</gene>